<sequence length="391" mass="39760">SSTETPPSYNQLNYNENLLRFFNSKPVTAPVELDPPKVESSYVSSARGEDARSTLSPVQGFEGSGGSGSSGNFTTGSNLHMSSVTNTSNAGTGTSGTGNSGDGGGGGGADGPGSGAAPPVTLTESLLNKHNDEMEKFMLKKHRESRGRSGEKNKKSANDAMKMLEYSGPGPGHGHGIKRGGSHSWEGEANKPKQQLTLNTGGGGGGMPPFLDIQHTSSSTQNKGLAGVGVGGAGGGVVGVGSSAGGNGSGTGNNNGNGNNNQPTTNQFTQSGLSCTQNINLWPPFSVGITTPTSVLSSHTAVAQSSFSPQHSLFPTFYYIPASIAASSPSGTSPNPNRPHKHAHVHSSSEKPSTSQAAAATMPLQYMTGVMYPHPSLFYTHPAAAAATAMV</sequence>
<reference key="1">
    <citation type="journal article" date="1997" name="Mol. Biol. Evol.">
        <title>Interspecific and intraspecific comparisons of the period locus in the Drosophila willistoni sibling species.</title>
        <authorList>
            <person name="Gleason J.M."/>
            <person name="Powell J.R."/>
        </authorList>
    </citation>
    <scope>NUCLEOTIDE SEQUENCE [GENOMIC DNA]</scope>
    <source>
        <strain>FA</strain>
        <strain>WE2</strain>
    </source>
</reference>
<keyword id="KW-0090">Biological rhythms</keyword>
<keyword id="KW-0963">Cytoplasm</keyword>
<keyword id="KW-0539">Nucleus</keyword>
<keyword id="KW-0597">Phosphoprotein</keyword>
<keyword id="KW-0677">Repeat</keyword>
<organism>
    <name type="scientific">Drosophila insularis</name>
    <name type="common">Fruit fly</name>
    <dbReference type="NCBI Taxonomy" id="46792"/>
    <lineage>
        <taxon>Eukaryota</taxon>
        <taxon>Metazoa</taxon>
        <taxon>Ecdysozoa</taxon>
        <taxon>Arthropoda</taxon>
        <taxon>Hexapoda</taxon>
        <taxon>Insecta</taxon>
        <taxon>Pterygota</taxon>
        <taxon>Neoptera</taxon>
        <taxon>Endopterygota</taxon>
        <taxon>Diptera</taxon>
        <taxon>Brachycera</taxon>
        <taxon>Muscomorpha</taxon>
        <taxon>Ephydroidea</taxon>
        <taxon>Drosophilidae</taxon>
        <taxon>Drosophila</taxon>
        <taxon>Sophophora</taxon>
    </lineage>
</organism>
<proteinExistence type="inferred from homology"/>
<protein>
    <recommendedName>
        <fullName>Period circadian protein</fullName>
    </recommendedName>
</protein>
<gene>
    <name type="primary">per</name>
</gene>
<name>PER_DROIN</name>
<comment type="function">
    <text evidence="1">Essential for biological clock functions. Determines the period length of circadian and ultradian rhythms; an increase in PER dosage leads to shortened circadian rhythms and a decrease leads to lengthened circadian rhythms. Essential for the circadian rhythmicity of locomotor activity, eclosion behavior, and for the rhythmic component of the male courtship song that originates in the thoracic nervous system. The biological cycle depends on the rhythmic formation and nuclear localization of the TIM-PER complex. Light induces the degradation of TIM, which promotes elimination of PER. Nuclear activity of the heterodimer coordinatively regulates PER and TIM transcription through a negative feedback loop. Behaves as a negative element in circadian transcriptional loop. Does not appear to bind DNA, suggesting indirect transcriptional inhibition (By similarity).</text>
</comment>
<comment type="subunit">
    <text evidence="1">Forms a heterodimer with timeless (TIM); the complex then translocates into the nucleus.</text>
</comment>
<comment type="subcellular location">
    <subcellularLocation>
        <location evidence="1">Nucleus</location>
    </subcellularLocation>
    <subcellularLocation>
        <location evidence="1">Cytoplasm</location>
        <location evidence="1">Perinuclear region</location>
    </subcellularLocation>
    <text evidence="1">Nuclear at specific periods of the day. First accumulates in the perinuclear region about one hour before translocation into the nucleus. Interaction with Tim is required for nuclear localization (By similarity).</text>
</comment>
<comment type="PTM">
    <text evidence="1">Phosphorylated with a circadian rhythmicity, probably by the double-time protein (dbt). Phosphorylation could be implicated in the stability of per monomer and in the formation of heterodimer per-tim (By similarity).</text>
</comment>
<evidence type="ECO:0000250" key="1"/>
<evidence type="ECO:0000256" key="2">
    <source>
        <dbReference type="SAM" id="MobiDB-lite"/>
    </source>
</evidence>
<dbReference type="EMBL" id="U51088">
    <property type="protein sequence ID" value="AAB41384.1"/>
    <property type="molecule type" value="Genomic_DNA"/>
</dbReference>
<dbReference type="EMBL" id="U51089">
    <property type="protein sequence ID" value="AAB41385.1"/>
    <property type="molecule type" value="Genomic_DNA"/>
</dbReference>
<dbReference type="GO" id="GO:0005634">
    <property type="term" value="C:nucleus"/>
    <property type="evidence" value="ECO:0007669"/>
    <property type="project" value="UniProtKB-SubCell"/>
</dbReference>
<dbReference type="GO" id="GO:0048471">
    <property type="term" value="C:perinuclear region of cytoplasm"/>
    <property type="evidence" value="ECO:0007669"/>
    <property type="project" value="UniProtKB-SubCell"/>
</dbReference>
<dbReference type="GO" id="GO:0000976">
    <property type="term" value="F:transcription cis-regulatory region binding"/>
    <property type="evidence" value="ECO:0007669"/>
    <property type="project" value="TreeGrafter"/>
</dbReference>
<dbReference type="GO" id="GO:0001222">
    <property type="term" value="F:transcription corepressor binding"/>
    <property type="evidence" value="ECO:0007669"/>
    <property type="project" value="TreeGrafter"/>
</dbReference>
<dbReference type="GO" id="GO:0032922">
    <property type="term" value="P:circadian regulation of gene expression"/>
    <property type="evidence" value="ECO:0007669"/>
    <property type="project" value="TreeGrafter"/>
</dbReference>
<dbReference type="GO" id="GO:0043153">
    <property type="term" value="P:entrainment of circadian clock by photoperiod"/>
    <property type="evidence" value="ECO:0007669"/>
    <property type="project" value="TreeGrafter"/>
</dbReference>
<dbReference type="GO" id="GO:0000122">
    <property type="term" value="P:negative regulation of transcription by RNA polymerase II"/>
    <property type="evidence" value="ECO:0007669"/>
    <property type="project" value="TreeGrafter"/>
</dbReference>
<dbReference type="InterPro" id="IPR050760">
    <property type="entry name" value="Period_circadian_regulator"/>
</dbReference>
<dbReference type="PANTHER" id="PTHR11269">
    <property type="entry name" value="PERIOD CIRCADIAN PROTEIN"/>
    <property type="match status" value="1"/>
</dbReference>
<dbReference type="PANTHER" id="PTHR11269:SF16">
    <property type="entry name" value="PERIOD CIRCADIAN PROTEIN"/>
    <property type="match status" value="1"/>
</dbReference>
<feature type="chain" id="PRO_0000162594" description="Period circadian protein">
    <location>
        <begin position="1" status="less than"/>
        <end position="391" status="greater than"/>
    </location>
</feature>
<feature type="region of interest" description="Disordered" evidence="2">
    <location>
        <begin position="27"/>
        <end position="121"/>
    </location>
</feature>
<feature type="region of interest" description="Disordered" evidence="2">
    <location>
        <begin position="163"/>
        <end position="188"/>
    </location>
</feature>
<feature type="region of interest" description="Disordered" evidence="2">
    <location>
        <begin position="241"/>
        <end position="270"/>
    </location>
</feature>
<feature type="region of interest" description="Disordered" evidence="2">
    <location>
        <begin position="328"/>
        <end position="357"/>
    </location>
</feature>
<feature type="compositionally biased region" description="Gly residues" evidence="2">
    <location>
        <begin position="93"/>
        <end position="114"/>
    </location>
</feature>
<feature type="compositionally biased region" description="Gly residues" evidence="2">
    <location>
        <begin position="241"/>
        <end position="255"/>
    </location>
</feature>
<feature type="sequence variant" description="In strain: FA.">
    <original>S</original>
    <variation>G</variation>
    <location>
        <position position="243"/>
    </location>
</feature>
<feature type="non-terminal residue">
    <location>
        <position position="1"/>
    </location>
</feature>
<feature type="non-terminal residue">
    <location>
        <position position="391"/>
    </location>
</feature>
<accession>P91613</accession>
<accession>P91612</accession>